<dbReference type="EMBL" id="AF426253">
    <property type="protein sequence ID" value="AAL29430.1"/>
    <property type="molecule type" value="mRNA"/>
</dbReference>
<dbReference type="EMBL" id="CP002685">
    <property type="protein sequence ID" value="AEC09872.1"/>
    <property type="molecule type" value="Genomic_DNA"/>
</dbReference>
<dbReference type="RefSeq" id="NP_181607.1">
    <property type="nucleotide sequence ID" value="NM_129637.3"/>
</dbReference>
<dbReference type="SMR" id="Q93WU8"/>
<dbReference type="BioGRID" id="4008">
    <property type="interactions" value="5"/>
</dbReference>
<dbReference type="FunCoup" id="Q93WU8">
    <property type="interactions" value="56"/>
</dbReference>
<dbReference type="IntAct" id="Q93WU8">
    <property type="interactions" value="4"/>
</dbReference>
<dbReference type="STRING" id="3702.Q93WU8"/>
<dbReference type="iPTMnet" id="Q93WU8"/>
<dbReference type="PaxDb" id="3702-AT2G40750.1"/>
<dbReference type="EnsemblPlants" id="AT2G40750.1">
    <property type="protein sequence ID" value="AT2G40750.1"/>
    <property type="gene ID" value="AT2G40750"/>
</dbReference>
<dbReference type="GeneID" id="818670"/>
<dbReference type="Gramene" id="AT2G40750.1">
    <property type="protein sequence ID" value="AT2G40750.1"/>
    <property type="gene ID" value="AT2G40750"/>
</dbReference>
<dbReference type="KEGG" id="ath:AT2G40750"/>
<dbReference type="Araport" id="AT2G40750"/>
<dbReference type="TAIR" id="AT2G40750">
    <property type="gene designation" value="WRKY54"/>
</dbReference>
<dbReference type="eggNOG" id="ENOG502RYCZ">
    <property type="taxonomic scope" value="Eukaryota"/>
</dbReference>
<dbReference type="HOGENOM" id="CLU_066547_0_0_1"/>
<dbReference type="InParanoid" id="Q93WU8"/>
<dbReference type="OMA" id="YERTSAM"/>
<dbReference type="PRO" id="PR:Q93WU8"/>
<dbReference type="Proteomes" id="UP000006548">
    <property type="component" value="Chromosome 2"/>
</dbReference>
<dbReference type="ExpressionAtlas" id="Q93WU8">
    <property type="expression patterns" value="baseline and differential"/>
</dbReference>
<dbReference type="GO" id="GO:0005634">
    <property type="term" value="C:nucleus"/>
    <property type="evidence" value="ECO:0007669"/>
    <property type="project" value="UniProtKB-SubCell"/>
</dbReference>
<dbReference type="GO" id="GO:0003700">
    <property type="term" value="F:DNA-binding transcription factor activity"/>
    <property type="evidence" value="ECO:0000315"/>
    <property type="project" value="TAIR"/>
</dbReference>
<dbReference type="GO" id="GO:0043565">
    <property type="term" value="F:sequence-specific DNA binding"/>
    <property type="evidence" value="ECO:0007669"/>
    <property type="project" value="InterPro"/>
</dbReference>
<dbReference type="GO" id="GO:0009742">
    <property type="term" value="P:brassinosteroid mediated signaling pathway"/>
    <property type="evidence" value="ECO:0007669"/>
    <property type="project" value="UniProtKB-KW"/>
</dbReference>
<dbReference type="GO" id="GO:0042742">
    <property type="term" value="P:defense response to bacterium"/>
    <property type="evidence" value="ECO:0000315"/>
    <property type="project" value="UniProtKB"/>
</dbReference>
<dbReference type="GO" id="GO:0050832">
    <property type="term" value="P:defense response to fungus"/>
    <property type="evidence" value="ECO:0000315"/>
    <property type="project" value="UniProtKB"/>
</dbReference>
<dbReference type="GO" id="GO:0009873">
    <property type="term" value="P:ethylene-activated signaling pathway"/>
    <property type="evidence" value="ECO:0007669"/>
    <property type="project" value="UniProtKB-KW"/>
</dbReference>
<dbReference type="GO" id="GO:1900056">
    <property type="term" value="P:negative regulation of leaf senescence"/>
    <property type="evidence" value="ECO:0000316"/>
    <property type="project" value="TAIR"/>
</dbReference>
<dbReference type="GO" id="GO:1900457">
    <property type="term" value="P:regulation of brassinosteroid mediated signaling pathway"/>
    <property type="evidence" value="ECO:0000315"/>
    <property type="project" value="UniProtKB"/>
</dbReference>
<dbReference type="GO" id="GO:0031347">
    <property type="term" value="P:regulation of defense response"/>
    <property type="evidence" value="ECO:0000315"/>
    <property type="project" value="TAIR"/>
</dbReference>
<dbReference type="GO" id="GO:0010104">
    <property type="term" value="P:regulation of ethylene-activated signaling pathway"/>
    <property type="evidence" value="ECO:0000315"/>
    <property type="project" value="UniProtKB"/>
</dbReference>
<dbReference type="GO" id="GO:2000022">
    <property type="term" value="P:regulation of jasmonic acid mediated signaling pathway"/>
    <property type="evidence" value="ECO:0000315"/>
    <property type="project" value="UniProtKB"/>
</dbReference>
<dbReference type="GO" id="GO:0047484">
    <property type="term" value="P:regulation of response to osmotic stress"/>
    <property type="evidence" value="ECO:0000315"/>
    <property type="project" value="UniProtKB"/>
</dbReference>
<dbReference type="GO" id="GO:2000070">
    <property type="term" value="P:regulation of response to water deprivation"/>
    <property type="evidence" value="ECO:0000315"/>
    <property type="project" value="UniProtKB"/>
</dbReference>
<dbReference type="GO" id="GO:2000031">
    <property type="term" value="P:regulation of salicylic acid mediated signaling pathway"/>
    <property type="evidence" value="ECO:0000315"/>
    <property type="project" value="UniProtKB"/>
</dbReference>
<dbReference type="GO" id="GO:0090333">
    <property type="term" value="P:regulation of stomatal closure"/>
    <property type="evidence" value="ECO:0000315"/>
    <property type="project" value="UniProtKB"/>
</dbReference>
<dbReference type="GO" id="GO:0006970">
    <property type="term" value="P:response to osmotic stress"/>
    <property type="evidence" value="ECO:0000270"/>
    <property type="project" value="UniProtKB"/>
</dbReference>
<dbReference type="GO" id="GO:0000302">
    <property type="term" value="P:response to reactive oxygen species"/>
    <property type="evidence" value="ECO:0000270"/>
    <property type="project" value="UniProtKB"/>
</dbReference>
<dbReference type="GO" id="GO:0009751">
    <property type="term" value="P:response to salicylic acid"/>
    <property type="evidence" value="ECO:0000270"/>
    <property type="project" value="TAIR"/>
</dbReference>
<dbReference type="Gene3D" id="2.20.25.80">
    <property type="entry name" value="WRKY domain"/>
    <property type="match status" value="1"/>
</dbReference>
<dbReference type="InterPro" id="IPR003657">
    <property type="entry name" value="WRKY_dom"/>
</dbReference>
<dbReference type="InterPro" id="IPR036576">
    <property type="entry name" value="WRKY_dom_sf"/>
</dbReference>
<dbReference type="InterPro" id="IPR044810">
    <property type="entry name" value="WRKY_plant"/>
</dbReference>
<dbReference type="PANTHER" id="PTHR31282">
    <property type="entry name" value="WRKY TRANSCRIPTION FACTOR 21-RELATED"/>
    <property type="match status" value="1"/>
</dbReference>
<dbReference type="Pfam" id="PF03106">
    <property type="entry name" value="WRKY"/>
    <property type="match status" value="1"/>
</dbReference>
<dbReference type="SMART" id="SM00774">
    <property type="entry name" value="WRKY"/>
    <property type="match status" value="1"/>
</dbReference>
<dbReference type="SUPFAM" id="SSF118290">
    <property type="entry name" value="WRKY DNA-binding domain"/>
    <property type="match status" value="1"/>
</dbReference>
<dbReference type="PROSITE" id="PS50811">
    <property type="entry name" value="WRKY"/>
    <property type="match status" value="1"/>
</dbReference>
<proteinExistence type="evidence at protein level"/>
<gene>
    <name evidence="9" type="primary">WRKY54</name>
    <name evidence="12" type="ordered locus">At2g40750</name>
    <name evidence="11" type="ORF">T7D17.7</name>
</gene>
<protein>
    <recommendedName>
        <fullName evidence="9">Probable WRKY transcription factor 54</fullName>
    </recommendedName>
    <alternativeName>
        <fullName evidence="9">WRKY DNA-binding protein 54</fullName>
    </alternativeName>
</protein>
<keyword id="KW-1070">Brassinosteroid signaling pathway</keyword>
<keyword id="KW-0238">DNA-binding</keyword>
<keyword id="KW-0936">Ethylene signaling pathway</keyword>
<keyword id="KW-1184">Jasmonic acid signaling pathway</keyword>
<keyword id="KW-0539">Nucleus</keyword>
<keyword id="KW-0597">Phosphoprotein</keyword>
<keyword id="KW-0611">Plant defense</keyword>
<keyword id="KW-1185">Reference proteome</keyword>
<keyword id="KW-0804">Transcription</keyword>
<keyword id="KW-0805">Transcription regulation</keyword>
<comment type="function">
    <text evidence="1 4 5 6 7 8 10">Transcription factor. Interacts specifically with the W box (5'-(T)TGAC[CT]-3'), a frequently occurring elicitor-responsive cis-acting element (By similarity). Together with WRKY70, negative regulator of developmental senescence, probably via the regulation of several senescence-associated markers genes (PubMed:22268143). Positive regulator of EDS1-dependent defense against E.amylovora (PubMed:22316300). In collaboration with WRKY70, prevents stomatal closure and, consequently, osmotic stress tolerance (PubMed:23815736). Together with WRKY46 and WRKY70, promotes brassinosteroid (BR)-regulated plant growth but prevent drought response by modulating gene expression (PubMed:28576847). Negative regulator of SA biosynthesis (PubMed:28837631). Prevents defense response to the necrotrophic pathogens P.carotovorum and B.cinerea, but promotes defense against biotrophic/hemibiotrophic pathogens P.syringae pv. tomato (Pst) DC3000, probably by regulating negatively the jasmonic acid (JA)/ethylene (ET) and positively the salicylic acid (SA) signaling pathways (PubMed:28837631).</text>
</comment>
<comment type="subunit">
    <text evidence="4 7">Interacts with WRKY30 (PubMed:22268143). Binds to BZR2/BES1 to cooperatively regulate the expression of target genes. Interacts with ASK7/BIN2 (PubMed:28576847).</text>
</comment>
<comment type="interaction">
    <interactant intactId="EBI-15207592">
        <id>Q93WU8</id>
    </interactant>
    <interactant intactId="EBI-4424361">
        <id>Q9SZI2</id>
        <label>NAP1;1</label>
    </interactant>
    <organismsDiffer>false</organismsDiffer>
    <experiments>3</experiments>
</comment>
<comment type="subcellular location">
    <subcellularLocation>
        <location evidence="2">Nucleus</location>
    </subcellularLocation>
</comment>
<comment type="tissue specificity">
    <text evidence="4">Expressed in leaves.</text>
</comment>
<comment type="developmental stage">
    <text evidence="4">In leaves, level increases gradually up to the point of leaf senescence.</text>
</comment>
<comment type="induction">
    <text evidence="4 5 6">Induced by reactive oxygen species (ROS) and salicylic acid (SA) (PubMed:22268143). Early but transient accumulation after osmotic stress (e.g. polyethylene glycol, PEG) (PubMed:23815736). Up-regulated by E.amylovora (PubMed:22316300).</text>
</comment>
<comment type="PTM">
    <text evidence="7">Phosphorylated and destabilized by ASK7/BIN2.</text>
</comment>
<comment type="disruption phenotype">
    <text evidence="4 5 6 7 8">Promotion of leaf senescence associated with abnormal expression levels of several senescence-associated markers genes. The double mutant wrky54 wrky70 exhibits stronger leaf senescence symptoms (PubMed:22268143). Increase in the number of necrotic leaves and in the intensity of necrosis in response to E.amylovora (PubMed:22316300). The double mutant wrky54 wrky70 exhibits an enhanced tolerance to osmotic stress associated with improved water retention and enhanced stomatal closure as well as salicylic acid (SA) accumulation, but a reduced induction of osmotic stress-responsive genes and reduced accumulation of the osmoprotectant proline (PubMed:23815736). Unstressed wrky54 wrky70 double mutant exhibits increased levels of SA, moderate accumulation of hydrogen peroxide H(2)O(2) and up-regulated expression of both SA and JA/ethylene (ET) responsive defense related genes; thus promoting cell wall fortification and consequently enhancing resistance to necrotrophic pathogens (e.g. P.carotovorum and B.cinerea) associated with reduced cell death, but is not sufficient to trigger hypersensitive reaction (HR)-like cell death and resistance to biotrophic/hemibiotrophic pathogens (e.g. P.syringae), characterized by reduced amount of callose (PubMed:28837631). The triple mutant wrky46 wrky54 wrky70 has defects in brassinosteroid (BR)-regulated growth and is more tolerant to drought stress (PubMed:28576847).</text>
</comment>
<comment type="similarity">
    <text evidence="11">Belongs to the WRKY group III family.</text>
</comment>
<evidence type="ECO:0000250" key="1">
    <source>
        <dbReference type="UniProtKB" id="Q9SUP6"/>
    </source>
</evidence>
<evidence type="ECO:0000255" key="2">
    <source>
        <dbReference type="PROSITE-ProRule" id="PRU00223"/>
    </source>
</evidence>
<evidence type="ECO:0000256" key="3">
    <source>
        <dbReference type="SAM" id="MobiDB-lite"/>
    </source>
</evidence>
<evidence type="ECO:0000269" key="4">
    <source>
    </source>
</evidence>
<evidence type="ECO:0000269" key="5">
    <source>
    </source>
</evidence>
<evidence type="ECO:0000269" key="6">
    <source>
    </source>
</evidence>
<evidence type="ECO:0000269" key="7">
    <source>
    </source>
</evidence>
<evidence type="ECO:0000269" key="8">
    <source>
    </source>
</evidence>
<evidence type="ECO:0000303" key="9">
    <source>
    </source>
</evidence>
<evidence type="ECO:0000303" key="10">
    <source>
    </source>
</evidence>
<evidence type="ECO:0000305" key="11"/>
<evidence type="ECO:0000312" key="12">
    <source>
        <dbReference type="Araport" id="AT2G40750"/>
    </source>
</evidence>
<accession>Q93WU8</accession>
<feature type="chain" id="PRO_0000133695" description="Probable WRKY transcription factor 54">
    <location>
        <begin position="1"/>
        <end position="346"/>
    </location>
</feature>
<feature type="DNA-binding region" description="WRKY" evidence="2">
    <location>
        <begin position="146"/>
        <end position="214"/>
    </location>
</feature>
<feature type="region of interest" description="Disordered" evidence="3">
    <location>
        <begin position="109"/>
        <end position="130"/>
    </location>
</feature>
<feature type="region of interest" description="Disordered" evidence="3">
    <location>
        <begin position="267"/>
        <end position="286"/>
    </location>
</feature>
<feature type="compositionally biased region" description="Basic residues" evidence="3">
    <location>
        <begin position="121"/>
        <end position="130"/>
    </location>
</feature>
<feature type="compositionally biased region" description="Basic and acidic residues" evidence="3">
    <location>
        <begin position="267"/>
        <end position="282"/>
    </location>
</feature>
<feature type="sequence conflict" description="In Ref. 1; AAL29430." evidence="11" ref="1">
    <original>T</original>
    <variation>A</variation>
    <location>
        <position position="143"/>
    </location>
</feature>
<feature type="sequence conflict" description="In Ref. 1; AAL29430." evidence="11" ref="1">
    <original>F</original>
    <variation>L</variation>
    <location>
        <position position="175"/>
    </location>
</feature>
<organism>
    <name type="scientific">Arabidopsis thaliana</name>
    <name type="common">Mouse-ear cress</name>
    <dbReference type="NCBI Taxonomy" id="3702"/>
    <lineage>
        <taxon>Eukaryota</taxon>
        <taxon>Viridiplantae</taxon>
        <taxon>Streptophyta</taxon>
        <taxon>Embryophyta</taxon>
        <taxon>Tracheophyta</taxon>
        <taxon>Spermatophyta</taxon>
        <taxon>Magnoliopsida</taxon>
        <taxon>eudicotyledons</taxon>
        <taxon>Gunneridae</taxon>
        <taxon>Pentapetalae</taxon>
        <taxon>rosids</taxon>
        <taxon>malvids</taxon>
        <taxon>Brassicales</taxon>
        <taxon>Brassicaceae</taxon>
        <taxon>Camelineae</taxon>
        <taxon>Arabidopsis</taxon>
    </lineage>
</organism>
<sequence>MDSNSNNTKSIKRKVVDQLVEGYEFATQLQLLLSHQHSNQYHIDETRLVSGSGSVSGGPDPVDELMSKILGSFHKTISVLDSFDPVAVSVPIAVEGSWNASCGDDSATPVSCNGGDSGESKKKRLGVGKGKRGCYTRKTRSHTRIVEAKSSEDRYAWRKYGQKEILNTTFPRSYFRCTHKPTQGCKATKQVQKQDQDSEMFQITYIGYHTCTANDQTHAKTEPFDQEIIMDSEKTLAASTAQNHVNAMVQEQENNTSSVTAIDAGMVKEEQNNNGDQSKDYYEGSSTGEDLSLVWQETMMFDDHQNHYYCGETSTTSHQFGFIDNDDQFSSFFDSYCADYERTSAM</sequence>
<name>WRK54_ARATH</name>
<reference key="1">
    <citation type="submission" date="2001-10" db="EMBL/GenBank/DDBJ databases">
        <authorList>
            <person name="Kushnir S."/>
            <person name="Ulker B."/>
            <person name="Somssich I.E."/>
        </authorList>
    </citation>
    <scope>NUCLEOTIDE SEQUENCE [MRNA]</scope>
    <source>
        <strain>cv. Columbia</strain>
        <tissue>Flower</tissue>
    </source>
</reference>
<reference key="2">
    <citation type="journal article" date="1999" name="Nature">
        <title>Sequence and analysis of chromosome 2 of the plant Arabidopsis thaliana.</title>
        <authorList>
            <person name="Lin X."/>
            <person name="Kaul S."/>
            <person name="Rounsley S.D."/>
            <person name="Shea T.P."/>
            <person name="Benito M.-I."/>
            <person name="Town C.D."/>
            <person name="Fujii C.Y."/>
            <person name="Mason T.M."/>
            <person name="Bowman C.L."/>
            <person name="Barnstead M.E."/>
            <person name="Feldblyum T.V."/>
            <person name="Buell C.R."/>
            <person name="Ketchum K.A."/>
            <person name="Lee J.J."/>
            <person name="Ronning C.M."/>
            <person name="Koo H.L."/>
            <person name="Moffat K.S."/>
            <person name="Cronin L.A."/>
            <person name="Shen M."/>
            <person name="Pai G."/>
            <person name="Van Aken S."/>
            <person name="Umayam L."/>
            <person name="Tallon L.J."/>
            <person name="Gill J.E."/>
            <person name="Adams M.D."/>
            <person name="Carrera A.J."/>
            <person name="Creasy T.H."/>
            <person name="Goodman H.M."/>
            <person name="Somerville C.R."/>
            <person name="Copenhaver G.P."/>
            <person name="Preuss D."/>
            <person name="Nierman W.C."/>
            <person name="White O."/>
            <person name="Eisen J.A."/>
            <person name="Salzberg S.L."/>
            <person name="Fraser C.M."/>
            <person name="Venter J.C."/>
        </authorList>
    </citation>
    <scope>NUCLEOTIDE SEQUENCE [LARGE SCALE GENOMIC DNA]</scope>
    <source>
        <strain>cv. Columbia</strain>
    </source>
</reference>
<reference key="3">
    <citation type="journal article" date="2017" name="Plant J.">
        <title>Araport11: a complete reannotation of the Arabidopsis thaliana reference genome.</title>
        <authorList>
            <person name="Cheng C.Y."/>
            <person name="Krishnakumar V."/>
            <person name="Chan A.P."/>
            <person name="Thibaud-Nissen F."/>
            <person name="Schobel S."/>
            <person name="Town C.D."/>
        </authorList>
    </citation>
    <scope>GENOME REANNOTATION</scope>
    <source>
        <strain>cv. Columbia</strain>
    </source>
</reference>
<reference key="4">
    <citation type="journal article" date="2012" name="J. Exp. Bot.">
        <title>WRKY54 and WRKY70 co-operate as negative regulators of leaf senescence in Arabidopsis thaliana.</title>
        <authorList>
            <person name="Besseau S."/>
            <person name="Li J."/>
            <person name="Palva E.T."/>
        </authorList>
    </citation>
    <scope>FUNCTION</scope>
    <scope>DISRUPTION PHENOTYPE</scope>
    <scope>TISSUE SPECIFICITY</scope>
    <scope>DEVELOPMENTAL STAGE</scope>
    <scope>INTERACTION WITH WRKY30</scope>
    <scope>INDUCTION BY REACTIVE OXYGEN SPECIES AND SALICYLIC ACID</scope>
    <source>
        <strain>cv. Columbia</strain>
    </source>
</reference>
<reference key="5">
    <citation type="journal article" date="2012" name="Mol. Plant Microbe Interact.">
        <title>EDS1 contributes to nonhost resistance of Arabidopsis thaliana against Erwinia amylovora.</title>
        <authorList>
            <person name="Moreau M."/>
            <person name="Degrave A."/>
            <person name="Vedel R."/>
            <person name="Bitton F."/>
            <person name="Patrit O."/>
            <person name="Renou J.-P."/>
            <person name="Barny M.-A."/>
            <person name="Fagard M."/>
        </authorList>
    </citation>
    <scope>FUNCTION</scope>
    <scope>DISRUPTION PHENOTYPE</scope>
    <scope>INDUCTION BY ERWINIA AMYLOVORA</scope>
    <source>
        <strain>cv. Columbia</strain>
    </source>
</reference>
<reference key="6">
    <citation type="journal article" date="2013" name="New Phytol.">
        <title>Defense-related transcription factors WRKY70 and WRKY54 modulate osmotic stress tolerance by regulating stomatal aperture in Arabidopsis.</title>
        <authorList>
            <person name="Li J."/>
            <person name="Besseau S."/>
            <person name="Toeroenen P."/>
            <person name="Sipari N."/>
            <person name="Kollist H."/>
            <person name="Holm L."/>
            <person name="Palva E.T."/>
        </authorList>
    </citation>
    <scope>FUNCTION</scope>
    <scope>DISRUPTION PHENOTYPE</scope>
    <scope>INDUCTION BY OSMOTIC STRESS</scope>
    <source>
        <strain>cv. Columbia</strain>
    </source>
</reference>
<reference key="7">
    <citation type="journal article" date="2017" name="Plant Cell">
        <title>Arabidopsis WRKY46, WRKY54, and WRKY70 transcription factors are involved in brassinosteroid-regulated plant growth and drought responses.</title>
        <authorList>
            <person name="Chen J."/>
            <person name="Nolan T.M."/>
            <person name="Ye H."/>
            <person name="Zhang M."/>
            <person name="Tong H."/>
            <person name="Xin P."/>
            <person name="Chu J."/>
            <person name="Chu C."/>
            <person name="Li Z."/>
            <person name="Yin Y."/>
        </authorList>
    </citation>
    <scope>FUNCTION</scope>
    <scope>DISRUPTION PHENOTYPE</scope>
    <scope>INTERACTION WITH BZR2/BES1</scope>
    <scope>PHOSPHORYLATION BY ASK7/BIN2</scope>
    <source>
        <strain>cv. Columbia</strain>
    </source>
</reference>
<reference key="8">
    <citation type="journal article" date="2017" name="PLoS ONE">
        <title>WRKY70 and its homolog WRKY54 negatively modulate the cell wall-associated defenses to necrotrophic pathogens in Arabidopsis.</title>
        <authorList>
            <person name="Li J."/>
            <person name="Zhong R."/>
            <person name="Palva E.T."/>
        </authorList>
    </citation>
    <scope>FUNCTION</scope>
    <scope>DISRUPTION PHENOTYPE</scope>
    <source>
        <strain>cv. Columbia</strain>
    </source>
</reference>